<reference key="1">
    <citation type="journal article" date="2015" name="BMC Genomics">
        <title>Genomic and transcriptomic analysis of the endophytic fungus Pestalotiopsis fici reveals its lifestyle and high potential for synthesis of natural products.</title>
        <authorList>
            <person name="Wang X."/>
            <person name="Zhang X."/>
            <person name="Liu L."/>
            <person name="Xiang M."/>
            <person name="Wang W."/>
            <person name="Sun X."/>
            <person name="Che Y."/>
            <person name="Guo L."/>
            <person name="Liu G."/>
            <person name="Guo L."/>
            <person name="Wang C."/>
            <person name="Yin W.B."/>
            <person name="Stadler M."/>
            <person name="Zhang X."/>
            <person name="Liu X."/>
        </authorList>
    </citation>
    <scope>NUCLEOTIDE SEQUENCE [LARGE SCALE GENOMIC DNA]</scope>
    <source>
        <strain>W106-1 / CGMCC3.15140</strain>
    </source>
</reference>
<reference key="2">
    <citation type="journal article" date="2017" name="Mol. Microbiol.">
        <title>A cryptic pigment biosynthetic pathway uncovered by heterologous expression is essential for conidial development in Pestalotiopsis fici.</title>
        <authorList>
            <person name="Zhang P."/>
            <person name="Wang X."/>
            <person name="Fan A."/>
            <person name="Zheng Y."/>
            <person name="Liu X."/>
            <person name="Wang S."/>
            <person name="Zou H."/>
            <person name="Oakley B.R."/>
            <person name="Keller N.P."/>
            <person name="Yin W.B."/>
        </authorList>
    </citation>
    <scope>FUNCTION</scope>
    <scope>DISRUPTION PHENOTYPE</scope>
    <scope>INDUCTION</scope>
    <scope>PATHWAY</scope>
</reference>
<reference key="3">
    <citation type="journal article" date="2019" name="Mol. Microbiol.">
        <title>Two transcription factors cooperatively regulate DHN melanin biosynthesis and development in Pestalotiopsis fici.</title>
        <authorList>
            <person name="Zhang P."/>
            <person name="Zhou S."/>
            <person name="Wang G."/>
            <person name="An Z."/>
            <person name="Liu X."/>
            <person name="Li K."/>
            <person name="Yin W.B."/>
        </authorList>
    </citation>
    <scope>DISRUPTION PHENOTYPE</scope>
    <scope>FUNCTION</scope>
</reference>
<gene>
    <name type="primary">PfmaH</name>
    <name type="ORF">PFICI_07104</name>
</gene>
<evidence type="ECO:0000255" key="1">
    <source>
        <dbReference type="PROSITE-ProRule" id="PRU00227"/>
    </source>
</evidence>
<evidence type="ECO:0000256" key="2">
    <source>
        <dbReference type="SAM" id="MobiDB-lite"/>
    </source>
</evidence>
<evidence type="ECO:0000269" key="3">
    <source>
    </source>
</evidence>
<evidence type="ECO:0000269" key="4">
    <source>
    </source>
</evidence>
<evidence type="ECO:0000303" key="5">
    <source>
    </source>
</evidence>
<name>PFMAH_PESFW</name>
<comment type="function">
    <text evidence="3 4">Transcription factor; part of the gene cluster that mediates the biosynthesis of dihydroxynaphthalene (DHN)-melanin, a bluish-green pigment forming a dark layer in the conidial wall that protects the conidia from UV radiations (PubMed:28517364). The 2 transcription factors present in the cluster, PfmaF and PfmaH, coordinately regulate DHN-melanin production (PubMed:31116900). PfmaH acts as a pathway specific regulator to mediate the expression of Pfma cluster genes including PfmaJ, leading to DHN-melanin production in conidia, and regulates the conidial formation (PubMed:31116900).</text>
</comment>
<comment type="subcellular location">
    <subcellularLocation>
        <location evidence="1">Nucleus</location>
    </subcellularLocation>
</comment>
<comment type="induction">
    <text evidence="3 4">Expression is positively regulazed by the cluster-specific transcription factor pfmaF.</text>
</comment>
<comment type="disruption phenotype">
    <text evidence="3 4">Leads to the accumulation of a large amount of shunt product scytalone.</text>
</comment>
<protein>
    <recommendedName>
        <fullName evidence="5">Transcription factor PfmaH</fullName>
    </recommendedName>
    <alternativeName>
        <fullName evidence="5">Conidial pigment biosynthesis cluster protein H</fullName>
    </alternativeName>
</protein>
<dbReference type="EMBL" id="KI912112">
    <property type="protein sequence ID" value="ETS82102.1"/>
    <property type="molecule type" value="Genomic_DNA"/>
</dbReference>
<dbReference type="RefSeq" id="XP_007833876.1">
    <property type="nucleotide sequence ID" value="XM_007835685.1"/>
</dbReference>
<dbReference type="GeneID" id="19272117"/>
<dbReference type="KEGG" id="pfy:PFICI_07104"/>
<dbReference type="eggNOG" id="KOG1721">
    <property type="taxonomic scope" value="Eukaryota"/>
</dbReference>
<dbReference type="HOGENOM" id="CLU_008362_0_0_1"/>
<dbReference type="InParanoid" id="W3X9K7"/>
<dbReference type="OMA" id="WTVFRCT"/>
<dbReference type="OrthoDB" id="40579at2759"/>
<dbReference type="Proteomes" id="UP000030651">
    <property type="component" value="Unassembled WGS sequence"/>
</dbReference>
<dbReference type="GO" id="GO:0005634">
    <property type="term" value="C:nucleus"/>
    <property type="evidence" value="ECO:0007669"/>
    <property type="project" value="UniProtKB-SubCell"/>
</dbReference>
<dbReference type="GO" id="GO:0003677">
    <property type="term" value="F:DNA binding"/>
    <property type="evidence" value="ECO:0007669"/>
    <property type="project" value="UniProtKB-KW"/>
</dbReference>
<dbReference type="GO" id="GO:0000981">
    <property type="term" value="F:DNA-binding transcription factor activity, RNA polymerase II-specific"/>
    <property type="evidence" value="ECO:0007669"/>
    <property type="project" value="InterPro"/>
</dbReference>
<dbReference type="GO" id="GO:0008270">
    <property type="term" value="F:zinc ion binding"/>
    <property type="evidence" value="ECO:0007669"/>
    <property type="project" value="InterPro"/>
</dbReference>
<dbReference type="GO" id="GO:0006351">
    <property type="term" value="P:DNA-templated transcription"/>
    <property type="evidence" value="ECO:0007669"/>
    <property type="project" value="InterPro"/>
</dbReference>
<dbReference type="GO" id="GO:0042438">
    <property type="term" value="P:melanin biosynthetic process"/>
    <property type="evidence" value="ECO:0007669"/>
    <property type="project" value="UniProtKB-KW"/>
</dbReference>
<dbReference type="CDD" id="cd00067">
    <property type="entry name" value="GAL4"/>
    <property type="match status" value="1"/>
</dbReference>
<dbReference type="Gene3D" id="4.10.240.10">
    <property type="entry name" value="Zn(2)-C6 fungal-type DNA-binding domain"/>
    <property type="match status" value="1"/>
</dbReference>
<dbReference type="InterPro" id="IPR007219">
    <property type="entry name" value="Transcription_factor_dom_fun"/>
</dbReference>
<dbReference type="InterPro" id="IPR036864">
    <property type="entry name" value="Zn2-C6_fun-type_DNA-bd_sf"/>
</dbReference>
<dbReference type="InterPro" id="IPR001138">
    <property type="entry name" value="Zn2Cys6_DnaBD"/>
</dbReference>
<dbReference type="PANTHER" id="PTHR47660:SF2">
    <property type="entry name" value="TRANSCRIPTION FACTOR WITH C2H2 AND ZN(2)-CYS(6) DNA BINDING DOMAIN (EUROFUNG)"/>
    <property type="match status" value="1"/>
</dbReference>
<dbReference type="PANTHER" id="PTHR47660">
    <property type="entry name" value="TRANSCRIPTION FACTOR WITH C2H2 AND ZN(2)-CYS(6) DNA BINDING DOMAIN (EUROFUNG)-RELATED-RELATED"/>
    <property type="match status" value="1"/>
</dbReference>
<dbReference type="Pfam" id="PF04082">
    <property type="entry name" value="Fungal_trans"/>
    <property type="match status" value="1"/>
</dbReference>
<dbReference type="Pfam" id="PF00172">
    <property type="entry name" value="Zn_clus"/>
    <property type="match status" value="1"/>
</dbReference>
<dbReference type="SMART" id="SM00066">
    <property type="entry name" value="GAL4"/>
    <property type="match status" value="1"/>
</dbReference>
<dbReference type="SUPFAM" id="SSF57701">
    <property type="entry name" value="Zn2/Cys6 DNA-binding domain"/>
    <property type="match status" value="1"/>
</dbReference>
<dbReference type="PROSITE" id="PS00463">
    <property type="entry name" value="ZN2_CY6_FUNGAL_1"/>
    <property type="match status" value="1"/>
</dbReference>
<dbReference type="PROSITE" id="PS50048">
    <property type="entry name" value="ZN2_CY6_FUNGAL_2"/>
    <property type="match status" value="1"/>
</dbReference>
<sequence>MLMISNCSRDLLQRHFSNYHDPSASEAPVAGAGPSVAGKTPIACLNCSQAKTGCNKEVPCQRCQDKGLHCVQRYARRTSKLAARSQAAATAAAAQASRVAQVTPVTVQQSLPNVSVSIEPSQTLSQIQPPLVHEGGASVTMDPAILEMPLMNSFMKQQDPEVHDGSSPANSITFPLPIHLKAESPRQRTASVDLNFNNMNSEPSPPSIEPMEDQSWVNSLMSNDPNFGPGNMFSSTYDLGYQLGPSYADPTTDFSQMSQSMLQHDASMSSMEFAGSPSGVSPFGDLSTSNSEPSSSSWGSSHTRATSICSAHCLYDQSGEFDVTSNSAKQGLPISTDSDVILTEAAWPMARCTPPIYSGACPRTALGHLQRLEQKSSYQGARPFAWHTLERELSSLNWDNADLASVVPMNSQTRDSLMSISQRFHARALDIHRENDPGRDKSPLGSNCGPMSFLNLPSSKVLEFFMKSYVRSLTSFYSLVSEGRIDPNQMHRNDPASIILMLLMIAQGASAVDSEDARILSMGLIETCRISLLDIIDKNVEMSADPTALRAALLFAHLGAWSGDKWLMDIAMGQRGMYISMLKHAGMLTAQPPICPVLDGDQGQKNSWRLWLQVETKNRLVYDWVMVDQELSLFHDTDPQLDVSELRASLPCSEKLWKSSTVEQWADAVQCYLSKGNPHPLTPPSLYHLYREFLEQKLVDGRVGLTAHQLRLLLHPIQKMLCQQRQTLTCFSDMFVPDQPGHVSFSKAYVMRQVEVVRSLLSRWHDLAMRCLNMNPDCTIMRTNMVLYHLISLNAVTNFPEIESFARQERYDGSYWGSRHQRCIYNRQQAVHDCGQVFSILRNLPTDRLPTWWSAAIYRATMILWADSALQSQSQAHASLSPPEATEGQYAMNAPQDFNHTLDYNVIPYVTRSDGTPFHLDRHSEVLDYAICAIDQGASSRLGEGIKRKLIALGNNWH</sequence>
<keyword id="KW-0238">DNA-binding</keyword>
<keyword id="KW-0470">Melanin biosynthesis</keyword>
<keyword id="KW-0479">Metal-binding</keyword>
<keyword id="KW-0539">Nucleus</keyword>
<keyword id="KW-1185">Reference proteome</keyword>
<keyword id="KW-0804">Transcription</keyword>
<keyword id="KW-0805">Transcription regulation</keyword>
<keyword id="KW-0862">Zinc</keyword>
<accession>W3X9K7</accession>
<proteinExistence type="evidence at transcript level"/>
<feature type="chain" id="PRO_0000445355" description="Transcription factor PfmaH">
    <location>
        <begin position="1"/>
        <end position="958"/>
    </location>
</feature>
<feature type="DNA-binding region" description="Zn(2)-C6 fungal-type" evidence="1">
    <location>
        <begin position="44"/>
        <end position="70"/>
    </location>
</feature>
<feature type="region of interest" description="Disordered" evidence="2">
    <location>
        <begin position="272"/>
        <end position="301"/>
    </location>
</feature>
<feature type="compositionally biased region" description="Low complexity" evidence="2">
    <location>
        <begin position="287"/>
        <end position="301"/>
    </location>
</feature>
<organism>
    <name type="scientific">Pestalotiopsis fici (strain W106-1 / CGMCC3.15140)</name>
    <dbReference type="NCBI Taxonomy" id="1229662"/>
    <lineage>
        <taxon>Eukaryota</taxon>
        <taxon>Fungi</taxon>
        <taxon>Dikarya</taxon>
        <taxon>Ascomycota</taxon>
        <taxon>Pezizomycotina</taxon>
        <taxon>Sordariomycetes</taxon>
        <taxon>Xylariomycetidae</taxon>
        <taxon>Amphisphaeriales</taxon>
        <taxon>Sporocadaceae</taxon>
        <taxon>Pestalotiopsis</taxon>
    </lineage>
</organism>